<organism>
    <name type="scientific">Mus musculus</name>
    <name type="common">Mouse</name>
    <dbReference type="NCBI Taxonomy" id="10090"/>
    <lineage>
        <taxon>Eukaryota</taxon>
        <taxon>Metazoa</taxon>
        <taxon>Chordata</taxon>
        <taxon>Craniata</taxon>
        <taxon>Vertebrata</taxon>
        <taxon>Euteleostomi</taxon>
        <taxon>Mammalia</taxon>
        <taxon>Eutheria</taxon>
        <taxon>Euarchontoglires</taxon>
        <taxon>Glires</taxon>
        <taxon>Rodentia</taxon>
        <taxon>Myomorpha</taxon>
        <taxon>Muroidea</taxon>
        <taxon>Muridae</taxon>
        <taxon>Murinae</taxon>
        <taxon>Mus</taxon>
        <taxon>Mus</taxon>
    </lineage>
</organism>
<keyword id="KW-0156">Chromatin regulator</keyword>
<keyword id="KW-0158">Chromosome</keyword>
<keyword id="KW-0238">DNA-binding</keyword>
<keyword id="KW-1017">Isopeptide bond</keyword>
<keyword id="KW-0488">Methylation</keyword>
<keyword id="KW-0539">Nucleus</keyword>
<keyword id="KW-0597">Phosphoprotein</keyword>
<keyword id="KW-1185">Reference proteome</keyword>
<keyword id="KW-0678">Repressor</keyword>
<keyword id="KW-0804">Transcription</keyword>
<keyword id="KW-0805">Transcription regulation</keyword>
<keyword id="KW-0832">Ubl conjugation</keyword>
<proteinExistence type="evidence at protein level"/>
<accession>P30658</accession>
<accession>A2ABG2</accession>
<accession>O35731</accession>
<accession>Q8CIA0</accession>
<protein>
    <recommendedName>
        <fullName>Chromobox protein homolog 2</fullName>
    </recommendedName>
    <alternativeName>
        <fullName>M33</fullName>
    </alternativeName>
    <alternativeName>
        <fullName>Modifier 3 protein</fullName>
    </alternativeName>
</protein>
<gene>
    <name type="primary">Cbx2</name>
    <name type="synonym">M33</name>
</gene>
<dbReference type="EMBL" id="X62537">
    <property type="protein sequence ID" value="CAA44398.1"/>
    <property type="molecule type" value="mRNA"/>
</dbReference>
<dbReference type="EMBL" id="Y13274">
    <property type="protein sequence ID" value="CAA73723.1"/>
    <property type="molecule type" value="mRNA"/>
</dbReference>
<dbReference type="EMBL" id="AL662835">
    <property type="status" value="NOT_ANNOTATED_CDS"/>
    <property type="molecule type" value="Genomic_DNA"/>
</dbReference>
<dbReference type="EMBL" id="CH466558">
    <property type="protein sequence ID" value="EDL34680.1"/>
    <property type="molecule type" value="Genomic_DNA"/>
</dbReference>
<dbReference type="EMBL" id="BC035199">
    <property type="protein sequence ID" value="AAH35199.1"/>
    <property type="molecule type" value="mRNA"/>
</dbReference>
<dbReference type="CCDS" id="CCDS25708.1"/>
<dbReference type="PIR" id="S23796">
    <property type="entry name" value="S23796"/>
</dbReference>
<dbReference type="RefSeq" id="NP_031649.2">
    <property type="nucleotide sequence ID" value="NM_007623.3"/>
</dbReference>
<dbReference type="BMRB" id="P30658"/>
<dbReference type="SMR" id="P30658"/>
<dbReference type="BioGRID" id="198535">
    <property type="interactions" value="21"/>
</dbReference>
<dbReference type="CORUM" id="P30658"/>
<dbReference type="DIP" id="DIP-690N"/>
<dbReference type="FunCoup" id="P30658">
    <property type="interactions" value="1455"/>
</dbReference>
<dbReference type="IntAct" id="P30658">
    <property type="interactions" value="17"/>
</dbReference>
<dbReference type="MINT" id="P30658"/>
<dbReference type="STRING" id="10090.ENSMUSP00000026662"/>
<dbReference type="GlyGen" id="P30658">
    <property type="glycosylation" value="2 sites, 1 O-linked glycan (1 site)"/>
</dbReference>
<dbReference type="iPTMnet" id="P30658"/>
<dbReference type="PhosphoSitePlus" id="P30658"/>
<dbReference type="SwissPalm" id="P30658"/>
<dbReference type="jPOST" id="P30658"/>
<dbReference type="PaxDb" id="10090-ENSMUSP00000026662"/>
<dbReference type="PeptideAtlas" id="P30658"/>
<dbReference type="ProteomicsDB" id="265684"/>
<dbReference type="Pumba" id="P30658"/>
<dbReference type="Antibodypedia" id="32656">
    <property type="antibodies" value="323 antibodies from 31 providers"/>
</dbReference>
<dbReference type="DNASU" id="12416"/>
<dbReference type="Ensembl" id="ENSMUST00000026662.8">
    <property type="protein sequence ID" value="ENSMUSP00000026662.8"/>
    <property type="gene ID" value="ENSMUSG00000025577.8"/>
</dbReference>
<dbReference type="GeneID" id="12416"/>
<dbReference type="KEGG" id="mmu:12416"/>
<dbReference type="UCSC" id="uc007mpt.1">
    <property type="organism name" value="mouse"/>
</dbReference>
<dbReference type="AGR" id="MGI:88289"/>
<dbReference type="CTD" id="84733"/>
<dbReference type="MGI" id="MGI:88289">
    <property type="gene designation" value="Cbx2"/>
</dbReference>
<dbReference type="VEuPathDB" id="HostDB:ENSMUSG00000025577"/>
<dbReference type="eggNOG" id="KOG2748">
    <property type="taxonomic scope" value="Eukaryota"/>
</dbReference>
<dbReference type="GeneTree" id="ENSGT00940000158816"/>
<dbReference type="HOGENOM" id="CLU_027573_0_0_1"/>
<dbReference type="InParanoid" id="P30658"/>
<dbReference type="OMA" id="NCGISWQ"/>
<dbReference type="TreeFam" id="TF106456"/>
<dbReference type="Reactome" id="R-MMU-3108214">
    <property type="pathway name" value="SUMOylation of DNA damage response and repair proteins"/>
</dbReference>
<dbReference type="Reactome" id="R-MMU-3899300">
    <property type="pathway name" value="SUMOylation of transcription cofactors"/>
</dbReference>
<dbReference type="Reactome" id="R-MMU-4551638">
    <property type="pathway name" value="SUMOylation of chromatin organization proteins"/>
</dbReference>
<dbReference type="Reactome" id="R-MMU-4570464">
    <property type="pathway name" value="SUMOylation of RNA binding proteins"/>
</dbReference>
<dbReference type="Reactome" id="R-MMU-8939243">
    <property type="pathway name" value="RUNX1 interacts with co-factors whose precise effect on RUNX1 targets is not known"/>
</dbReference>
<dbReference type="BioGRID-ORCS" id="12416">
    <property type="hits" value="4 hits in 81 CRISPR screens"/>
</dbReference>
<dbReference type="CD-CODE" id="3F0300C2">
    <property type="entry name" value="Nuclear speckle"/>
</dbReference>
<dbReference type="ChiTaRS" id="Cbx2">
    <property type="organism name" value="mouse"/>
</dbReference>
<dbReference type="PRO" id="PR:P30658"/>
<dbReference type="Proteomes" id="UP000000589">
    <property type="component" value="Chromosome 11"/>
</dbReference>
<dbReference type="RNAct" id="P30658">
    <property type="molecule type" value="protein"/>
</dbReference>
<dbReference type="Bgee" id="ENSMUSG00000025577">
    <property type="expression patterns" value="Expressed in gastrula and 195 other cell types or tissues"/>
</dbReference>
<dbReference type="GO" id="GO:0000791">
    <property type="term" value="C:euchromatin"/>
    <property type="evidence" value="ECO:0000314"/>
    <property type="project" value="MGI"/>
</dbReference>
<dbReference type="GO" id="GO:0000792">
    <property type="term" value="C:heterochromatin"/>
    <property type="evidence" value="ECO:0000314"/>
    <property type="project" value="UniProtKB"/>
</dbReference>
<dbReference type="GO" id="GO:0016607">
    <property type="term" value="C:nuclear speck"/>
    <property type="evidence" value="ECO:0007669"/>
    <property type="project" value="UniProtKB-SubCell"/>
</dbReference>
<dbReference type="GO" id="GO:0005634">
    <property type="term" value="C:nucleus"/>
    <property type="evidence" value="ECO:0000314"/>
    <property type="project" value="UniProtKB"/>
</dbReference>
<dbReference type="GO" id="GO:0031519">
    <property type="term" value="C:PcG protein complex"/>
    <property type="evidence" value="ECO:0000314"/>
    <property type="project" value="MGI"/>
</dbReference>
<dbReference type="GO" id="GO:0035102">
    <property type="term" value="C:PRC1 complex"/>
    <property type="evidence" value="ECO:0000250"/>
    <property type="project" value="UniProtKB"/>
</dbReference>
<dbReference type="GO" id="GO:0003682">
    <property type="term" value="F:chromatin binding"/>
    <property type="evidence" value="ECO:0000314"/>
    <property type="project" value="MGI"/>
</dbReference>
<dbReference type="GO" id="GO:0003677">
    <property type="term" value="F:DNA binding"/>
    <property type="evidence" value="ECO:0007669"/>
    <property type="project" value="UniProtKB-KW"/>
</dbReference>
<dbReference type="GO" id="GO:0062072">
    <property type="term" value="F:histone H3K9me2/3 reader activity"/>
    <property type="evidence" value="ECO:0000314"/>
    <property type="project" value="UniProtKB"/>
</dbReference>
<dbReference type="GO" id="GO:0045137">
    <property type="term" value="P:development of primary sexual characteristics"/>
    <property type="evidence" value="ECO:0007669"/>
    <property type="project" value="Ensembl"/>
</dbReference>
<dbReference type="GO" id="GO:0000122">
    <property type="term" value="P:negative regulation of transcription by RNA polymerase II"/>
    <property type="evidence" value="ECO:0000314"/>
    <property type="project" value="MGI"/>
</dbReference>
<dbReference type="CDD" id="cd18647">
    <property type="entry name" value="CD_Cbx2"/>
    <property type="match status" value="1"/>
</dbReference>
<dbReference type="FunFam" id="2.40.50.40:FF:000006">
    <property type="entry name" value="Chromobox protein homolog 7"/>
    <property type="match status" value="1"/>
</dbReference>
<dbReference type="Gene3D" id="2.40.50.40">
    <property type="match status" value="1"/>
</dbReference>
<dbReference type="InterPro" id="IPR042796">
    <property type="entry name" value="CBX2"/>
</dbReference>
<dbReference type="InterPro" id="IPR033773">
    <property type="entry name" value="CBX7_C"/>
</dbReference>
<dbReference type="InterPro" id="IPR016197">
    <property type="entry name" value="Chromo-like_dom_sf"/>
</dbReference>
<dbReference type="InterPro" id="IPR000953">
    <property type="entry name" value="Chromo/chromo_shadow_dom"/>
</dbReference>
<dbReference type="InterPro" id="IPR023780">
    <property type="entry name" value="Chromo_domain"/>
</dbReference>
<dbReference type="InterPro" id="IPR023779">
    <property type="entry name" value="Chromodomain_CS"/>
</dbReference>
<dbReference type="PANTHER" id="PTHR46860">
    <property type="entry name" value="CHROMOBOX PROTEIN HOMOLOG 2"/>
    <property type="match status" value="1"/>
</dbReference>
<dbReference type="PANTHER" id="PTHR46860:SF1">
    <property type="entry name" value="CHROMOBOX PROTEIN HOMOLOG 2"/>
    <property type="match status" value="1"/>
</dbReference>
<dbReference type="Pfam" id="PF17218">
    <property type="entry name" value="CBX7_C"/>
    <property type="match status" value="1"/>
</dbReference>
<dbReference type="Pfam" id="PF00385">
    <property type="entry name" value="Chromo"/>
    <property type="match status" value="1"/>
</dbReference>
<dbReference type="SMART" id="SM00298">
    <property type="entry name" value="CHROMO"/>
    <property type="match status" value="1"/>
</dbReference>
<dbReference type="SUPFAM" id="SSF54160">
    <property type="entry name" value="Chromo domain-like"/>
    <property type="match status" value="1"/>
</dbReference>
<dbReference type="PROSITE" id="PS00598">
    <property type="entry name" value="CHROMO_1"/>
    <property type="match status" value="1"/>
</dbReference>
<dbReference type="PROSITE" id="PS50013">
    <property type="entry name" value="CHROMO_2"/>
    <property type="match status" value="1"/>
</dbReference>
<name>CBX2_MOUSE</name>
<sequence length="519" mass="54918">MEELSSVGEQVFAAECILSKRLRKGKLEYLVKWRGWSSKHNSWEPEENILDPRLLLAFQKKEHEKEVQNRKRGKRPRGRPRKHTVTSSCSRRSKLKEPDAPSKSKSSSSSSSSTSSSSSSDEEEDDSDLDSKRGPRGRETHPVPQKKAQILVAKPELKDPIRKKRGRKPLPPEQKAARRPVSLAKVLKTTRKDLGTSAAKLPPPLSAPVAGLAALKAHTKEACGGPSTMATPENLASLMKGMAGSPSRGGIWQSSIVHYMNRMSQSQVQAASRLALKAQATNKCGLGLDLKVRTQKGGELGGSPAGGKVPKAPGGGAAEQQRGNHSGSPGAQLAPTQELSLQVLDLQSVKNGVPGVGLLARHAPAKAIPATNPATGKGPGSGPTGANMTNAPTDNNKGEKLTCKATALPAPSVKRDTVKSVAASGGQEGHTAPGEGRKPPALSELSTGEENSSSDSDPDSTSLPSAAQNLSVAIQTSQDWKPTRSLIEHVFVTDVTANLITVTVKESPTSVGFFNLRHY</sequence>
<comment type="function">
    <text evidence="1 5 6">Component of a Polycomb group (PcG) multiprotein PRC1-like complex, a complex class required to maintain the transcriptionally repressive state of many genes, including Hox genes, throughout development (By similarity). PcG PRC1 complex acts via chromatin remodeling and modification of histones; it mediates monoubiquitination of histone H2A 'Lys-119', rendering chromatin heritably changed in its expressibility (By similarity). Binds to histone H3 trimethylated at 'Lys-9' (H3K9me3) or at 'Lys-27' (H3K27me3) (PubMed:16537902). Plays a role in the lineage differentiation of the germ layers in embryonic development (PubMed:22226355). Involved in sexual development, acting as activator of NR5A1 expression (By similarity).</text>
</comment>
<comment type="subunit">
    <text evidence="1 5 6 7">Component of a PRC1-like complex (By similarity). The composition of the PRC1 complex may differ between the PRC1 complex in pluripotent embryonic stem cells containing RNF2, CBX7 and PCGF2, and the PRC1 complex in differentiating cells containing RNF2, CBX2, CBX4 and BMI1 (PubMed:22226355). Interacts with RING1/RNF2 (PubMed:22226355, PubMed:9312051). Interacts (via chromodomain) with histone H3K9Me3 and H3K27me3 (PubMed:16537902). May interact with H3C15 and H3C1 (By similarity).</text>
</comment>
<comment type="interaction">
    <interactant intactId="EBI-360174">
        <id>P30658</id>
    </interactant>
    <interactant intactId="EBI-3043887">
        <id>Q60848</id>
        <label>Hells</label>
    </interactant>
    <organismsDiffer>false</organismsDiffer>
    <experiments>2</experiments>
</comment>
<comment type="interaction">
    <interactant intactId="EBI-360174">
        <id>P30658</id>
    </interactant>
    <interactant intactId="EBI-929290">
        <id>Q8CCI5</id>
        <label>Rybp</label>
    </interactant>
    <organismsDiffer>false</organismsDiffer>
    <experiments>3</experiments>
</comment>
<comment type="subcellular location">
    <subcellularLocation>
        <location evidence="7">Nucleus speckle</location>
    </subcellularLocation>
    <subcellularLocation>
        <location evidence="5">Chromosome</location>
    </subcellularLocation>
    <text evidence="5">Localizes to the inactivated X chromosome in females.</text>
</comment>
<comment type="tissue specificity">
    <text evidence="6">Expressed in embryoid bodies.</text>
</comment>
<comment type="developmental stage">
    <text evidence="7">Expressed in most embryonic tissues except the heart from 8.5 to 11.5 dpc. Expressed in central nervous system (CNS, ventricular zone and spinal cord), peripheral nervous system (PNS, sensory cranial and spinal ganglia), olfactory and tongue epithelia, lung, gastrointestinal duct and urogenital system at 13.5 dpc. Expressed in CNS, thymus, various epithelial cell types including the olfactory, tooth and tongue epithelia at 15.5 dpc.</text>
</comment>
<feature type="chain" id="PRO_0000080202" description="Chromobox protein homolog 2">
    <location>
        <begin position="1"/>
        <end position="519"/>
    </location>
</feature>
<feature type="domain" description="Chromo" evidence="3">
    <location>
        <begin position="12"/>
        <end position="70"/>
    </location>
</feature>
<feature type="DNA-binding region" description="A.T hook">
    <location>
        <begin position="75"/>
        <end position="87"/>
    </location>
</feature>
<feature type="region of interest" description="Disordered" evidence="4">
    <location>
        <begin position="60"/>
        <end position="180"/>
    </location>
</feature>
<feature type="region of interest" description="Disordered" evidence="4">
    <location>
        <begin position="295"/>
        <end position="336"/>
    </location>
</feature>
<feature type="region of interest" description="Disordered" evidence="4">
    <location>
        <begin position="367"/>
        <end position="464"/>
    </location>
</feature>
<feature type="short sequence motif" description="Nuclear localization signal" evidence="2">
    <location>
        <begin position="164"/>
        <end position="169"/>
    </location>
</feature>
<feature type="compositionally biased region" description="Basic and acidic residues" evidence="4">
    <location>
        <begin position="60"/>
        <end position="69"/>
    </location>
</feature>
<feature type="compositionally biased region" description="Basic residues" evidence="4">
    <location>
        <begin position="70"/>
        <end position="84"/>
    </location>
</feature>
<feature type="compositionally biased region" description="Low complexity" evidence="4">
    <location>
        <begin position="103"/>
        <end position="119"/>
    </location>
</feature>
<feature type="compositionally biased region" description="Basic and acidic residues" evidence="4">
    <location>
        <begin position="129"/>
        <end position="141"/>
    </location>
</feature>
<feature type="compositionally biased region" description="Polar residues" evidence="4">
    <location>
        <begin position="321"/>
        <end position="336"/>
    </location>
</feature>
<feature type="compositionally biased region" description="Polar residues" evidence="4">
    <location>
        <begin position="384"/>
        <end position="395"/>
    </location>
</feature>
<feature type="compositionally biased region" description="Low complexity" evidence="4">
    <location>
        <begin position="453"/>
        <end position="464"/>
    </location>
</feature>
<feature type="modified residue" description="Asymmetric dimethylarginine; alternate" evidence="1">
    <location>
        <position position="248"/>
    </location>
</feature>
<feature type="modified residue" description="Omega-N-methylarginine; alternate" evidence="9">
    <location>
        <position position="248"/>
    </location>
</feature>
<feature type="modified residue" description="Phosphoserine" evidence="1">
    <location>
        <position position="303"/>
    </location>
</feature>
<feature type="cross-link" description="Glycyl lysine isopeptide (Lys-Gly) (interchain with G-Cter in SUMO2)" evidence="1">
    <location>
        <position position="147"/>
    </location>
</feature>
<feature type="cross-link" description="Glycyl lysine isopeptide (Lys-Gly) (interchain with G-Cter in SUMO2)" evidence="1">
    <location>
        <position position="154"/>
    </location>
</feature>
<feature type="sequence conflict" description="In Ref. 2; CAA73723." evidence="8" ref="2">
    <original>M</original>
    <variation>EF</variation>
    <location>
        <position position="1"/>
    </location>
</feature>
<feature type="sequence conflict" description="In Ref. 1; CAA44398." evidence="8" ref="1">
    <original>V</original>
    <variation>A</variation>
    <location>
        <position position="85"/>
    </location>
</feature>
<feature type="sequence conflict" description="In Ref. 2; CAA73723." evidence="8" ref="2">
    <original>S</original>
    <variation>G</variation>
    <location>
        <position position="107"/>
    </location>
</feature>
<feature type="sequence conflict" description="In Ref. 2; CAA73723." evidence="8" ref="2">
    <original>R</original>
    <variation>G</variation>
    <location>
        <position position="133"/>
    </location>
</feature>
<reference key="1">
    <citation type="journal article" date="1992" name="Development">
        <title>The mouse has a Polycomb-like chromobox gene.</title>
        <authorList>
            <person name="Pearce J.J.H."/>
            <person name="Singh P.B."/>
            <person name="Gaunt S.J."/>
        </authorList>
    </citation>
    <scope>NUCLEOTIDE SEQUENCE [MRNA]</scope>
    <source>
        <strain>C57BL/6J</strain>
        <tissue>Embryo</tissue>
    </source>
</reference>
<reference key="2">
    <citation type="journal article" date="1997" name="EMBO J.">
        <title>Ring1A is a transcriptional repressor that interacts with the Polycomb-M33 protein and is expressed at rhombomere boundaries in the mouse hindbrain.</title>
        <authorList>
            <person name="Schoorlemmer J."/>
            <person name="Marcos-Gutierrez C."/>
            <person name="Were F."/>
            <person name="Martinez R."/>
            <person name="Garcia E."/>
            <person name="Satijn D.P.E."/>
            <person name="Otte A.P."/>
            <person name="Vidal M."/>
        </authorList>
    </citation>
    <scope>NUCLEOTIDE SEQUENCE [MRNA]</scope>
    <scope>INTERACTION WITH RING1</scope>
    <scope>DEVELOPMENTAL STAGE</scope>
    <scope>SUBCELLULAR LOCATION</scope>
    <source>
        <tissue>Embryo</tissue>
    </source>
</reference>
<reference key="3">
    <citation type="journal article" date="2009" name="PLoS Biol.">
        <title>Lineage-specific biology revealed by a finished genome assembly of the mouse.</title>
        <authorList>
            <person name="Church D.M."/>
            <person name="Goodstadt L."/>
            <person name="Hillier L.W."/>
            <person name="Zody M.C."/>
            <person name="Goldstein S."/>
            <person name="She X."/>
            <person name="Bult C.J."/>
            <person name="Agarwala R."/>
            <person name="Cherry J.L."/>
            <person name="DiCuccio M."/>
            <person name="Hlavina W."/>
            <person name="Kapustin Y."/>
            <person name="Meric P."/>
            <person name="Maglott D."/>
            <person name="Birtle Z."/>
            <person name="Marques A.C."/>
            <person name="Graves T."/>
            <person name="Zhou S."/>
            <person name="Teague B."/>
            <person name="Potamousis K."/>
            <person name="Churas C."/>
            <person name="Place M."/>
            <person name="Herschleb J."/>
            <person name="Runnheim R."/>
            <person name="Forrest D."/>
            <person name="Amos-Landgraf J."/>
            <person name="Schwartz D.C."/>
            <person name="Cheng Z."/>
            <person name="Lindblad-Toh K."/>
            <person name="Eichler E.E."/>
            <person name="Ponting C.P."/>
        </authorList>
    </citation>
    <scope>NUCLEOTIDE SEQUENCE [LARGE SCALE GENOMIC DNA]</scope>
    <source>
        <strain>C57BL/6J</strain>
    </source>
</reference>
<reference key="4">
    <citation type="submission" date="2005-07" db="EMBL/GenBank/DDBJ databases">
        <authorList>
            <person name="Mural R.J."/>
            <person name="Adams M.D."/>
            <person name="Myers E.W."/>
            <person name="Smith H.O."/>
            <person name="Venter J.C."/>
        </authorList>
    </citation>
    <scope>NUCLEOTIDE SEQUENCE [LARGE SCALE GENOMIC DNA]</scope>
</reference>
<reference key="5">
    <citation type="journal article" date="2004" name="Genome Res.">
        <title>The status, quality, and expansion of the NIH full-length cDNA project: the Mammalian Gene Collection (MGC).</title>
        <authorList>
            <consortium name="The MGC Project Team"/>
        </authorList>
    </citation>
    <scope>NUCLEOTIDE SEQUENCE [LARGE SCALE MRNA]</scope>
    <source>
        <strain>FVB/N</strain>
        <tissue>Liver</tissue>
    </source>
</reference>
<reference key="6">
    <citation type="journal article" date="2006" name="Mol. Cell. Biol.">
        <title>Mouse polycomb proteins bind differentially to methylated histone H3 and RNA and are enriched in facultative heterochromatin.</title>
        <authorList>
            <person name="Bernstein E."/>
            <person name="Duncan E.M."/>
            <person name="Masui O."/>
            <person name="Gil J."/>
            <person name="Heard E."/>
            <person name="Allis C.D."/>
        </authorList>
    </citation>
    <scope>FUNCTION</scope>
    <scope>INTERACTION WITH HISTONE H3K9ME3 AND H3K27ME3</scope>
    <scope>SUBCELLULAR LOCATION</scope>
</reference>
<reference key="7">
    <citation type="journal article" date="2012" name="Cell Stem Cell">
        <title>Nonoverlapping functions of the Polycomb group Cbx family of proteins in embryonic stem cells.</title>
        <authorList>
            <person name="Morey L."/>
            <person name="Pascual G."/>
            <person name="Cozzuto L."/>
            <person name="Roma G."/>
            <person name="Wutz A."/>
            <person name="Benitah S.A."/>
            <person name="Di Croce L."/>
        </authorList>
    </citation>
    <scope>FUNCTION</scope>
    <scope>INTERACTION WITH RNF2</scope>
    <scope>TISSUE SPECIFICITY</scope>
</reference>
<reference key="8">
    <citation type="journal article" date="2014" name="Mol. Cell. Proteomics">
        <title>Immunoaffinity enrichment and mass spectrometry analysis of protein methylation.</title>
        <authorList>
            <person name="Guo A."/>
            <person name="Gu H."/>
            <person name="Zhou J."/>
            <person name="Mulhern D."/>
            <person name="Wang Y."/>
            <person name="Lee K.A."/>
            <person name="Yang V."/>
            <person name="Aguiar M."/>
            <person name="Kornhauser J."/>
            <person name="Jia X."/>
            <person name="Ren J."/>
            <person name="Beausoleil S.A."/>
            <person name="Silva J.C."/>
            <person name="Vemulapalli V."/>
            <person name="Bedford M.T."/>
            <person name="Comb M.J."/>
        </authorList>
    </citation>
    <scope>METHYLATION [LARGE SCALE ANALYSIS] AT ARG-248</scope>
    <scope>IDENTIFICATION BY MASS SPECTROMETRY [LARGE SCALE ANALYSIS]</scope>
    <source>
        <tissue>Embryo</tissue>
    </source>
</reference>
<evidence type="ECO:0000250" key="1">
    <source>
        <dbReference type="UniProtKB" id="Q14781"/>
    </source>
</evidence>
<evidence type="ECO:0000255" key="2"/>
<evidence type="ECO:0000255" key="3">
    <source>
        <dbReference type="PROSITE-ProRule" id="PRU00053"/>
    </source>
</evidence>
<evidence type="ECO:0000256" key="4">
    <source>
        <dbReference type="SAM" id="MobiDB-lite"/>
    </source>
</evidence>
<evidence type="ECO:0000269" key="5">
    <source>
    </source>
</evidence>
<evidence type="ECO:0000269" key="6">
    <source>
    </source>
</evidence>
<evidence type="ECO:0000269" key="7">
    <source>
    </source>
</evidence>
<evidence type="ECO:0000305" key="8"/>
<evidence type="ECO:0007744" key="9">
    <source>
    </source>
</evidence>